<feature type="chain" id="PRO_1000054911" description="Small ribosomal subunit protein uS17">
    <location>
        <begin position="1"/>
        <end position="82"/>
    </location>
</feature>
<dbReference type="EMBL" id="CP000644">
    <property type="protein sequence ID" value="ABO92019.1"/>
    <property type="molecule type" value="Genomic_DNA"/>
</dbReference>
<dbReference type="RefSeq" id="WP_005319730.1">
    <property type="nucleotide sequence ID" value="NC_009348.1"/>
</dbReference>
<dbReference type="SMR" id="A4SSZ7"/>
<dbReference type="STRING" id="29491.GCA_000820065_03474"/>
<dbReference type="GeneID" id="92721507"/>
<dbReference type="KEGG" id="asa:ASA_4078"/>
<dbReference type="eggNOG" id="COG0186">
    <property type="taxonomic scope" value="Bacteria"/>
</dbReference>
<dbReference type="HOGENOM" id="CLU_073626_1_1_6"/>
<dbReference type="Proteomes" id="UP000000225">
    <property type="component" value="Chromosome"/>
</dbReference>
<dbReference type="GO" id="GO:0022627">
    <property type="term" value="C:cytosolic small ribosomal subunit"/>
    <property type="evidence" value="ECO:0007669"/>
    <property type="project" value="TreeGrafter"/>
</dbReference>
<dbReference type="GO" id="GO:0019843">
    <property type="term" value="F:rRNA binding"/>
    <property type="evidence" value="ECO:0007669"/>
    <property type="project" value="UniProtKB-UniRule"/>
</dbReference>
<dbReference type="GO" id="GO:0003735">
    <property type="term" value="F:structural constituent of ribosome"/>
    <property type="evidence" value="ECO:0007669"/>
    <property type="project" value="InterPro"/>
</dbReference>
<dbReference type="GO" id="GO:0006412">
    <property type="term" value="P:translation"/>
    <property type="evidence" value="ECO:0007669"/>
    <property type="project" value="UniProtKB-UniRule"/>
</dbReference>
<dbReference type="CDD" id="cd00364">
    <property type="entry name" value="Ribosomal_uS17"/>
    <property type="match status" value="1"/>
</dbReference>
<dbReference type="FunFam" id="2.40.50.140:FF:000014">
    <property type="entry name" value="30S ribosomal protein S17"/>
    <property type="match status" value="1"/>
</dbReference>
<dbReference type="Gene3D" id="2.40.50.140">
    <property type="entry name" value="Nucleic acid-binding proteins"/>
    <property type="match status" value="1"/>
</dbReference>
<dbReference type="HAMAP" id="MF_01345_B">
    <property type="entry name" value="Ribosomal_uS17_B"/>
    <property type="match status" value="1"/>
</dbReference>
<dbReference type="InterPro" id="IPR012340">
    <property type="entry name" value="NA-bd_OB-fold"/>
</dbReference>
<dbReference type="InterPro" id="IPR000266">
    <property type="entry name" value="Ribosomal_uS17"/>
</dbReference>
<dbReference type="InterPro" id="IPR019984">
    <property type="entry name" value="Ribosomal_uS17_bact/chlr"/>
</dbReference>
<dbReference type="InterPro" id="IPR019979">
    <property type="entry name" value="Ribosomal_uS17_CS"/>
</dbReference>
<dbReference type="NCBIfam" id="NF004123">
    <property type="entry name" value="PRK05610.1"/>
    <property type="match status" value="1"/>
</dbReference>
<dbReference type="NCBIfam" id="TIGR03635">
    <property type="entry name" value="uS17_bact"/>
    <property type="match status" value="1"/>
</dbReference>
<dbReference type="PANTHER" id="PTHR10744">
    <property type="entry name" value="40S RIBOSOMAL PROTEIN S11 FAMILY MEMBER"/>
    <property type="match status" value="1"/>
</dbReference>
<dbReference type="PANTHER" id="PTHR10744:SF1">
    <property type="entry name" value="SMALL RIBOSOMAL SUBUNIT PROTEIN US17M"/>
    <property type="match status" value="1"/>
</dbReference>
<dbReference type="Pfam" id="PF00366">
    <property type="entry name" value="Ribosomal_S17"/>
    <property type="match status" value="1"/>
</dbReference>
<dbReference type="PRINTS" id="PR00973">
    <property type="entry name" value="RIBOSOMALS17"/>
</dbReference>
<dbReference type="SUPFAM" id="SSF50249">
    <property type="entry name" value="Nucleic acid-binding proteins"/>
    <property type="match status" value="1"/>
</dbReference>
<dbReference type="PROSITE" id="PS00056">
    <property type="entry name" value="RIBOSOMAL_S17"/>
    <property type="match status" value="1"/>
</dbReference>
<accession>A4SSZ7</accession>
<reference key="1">
    <citation type="journal article" date="2008" name="BMC Genomics">
        <title>The genome of Aeromonas salmonicida subsp. salmonicida A449: insights into the evolution of a fish pathogen.</title>
        <authorList>
            <person name="Reith M.E."/>
            <person name="Singh R.K."/>
            <person name="Curtis B."/>
            <person name="Boyd J.M."/>
            <person name="Bouevitch A."/>
            <person name="Kimball J."/>
            <person name="Munholland J."/>
            <person name="Murphy C."/>
            <person name="Sarty D."/>
            <person name="Williams J."/>
            <person name="Nash J.H."/>
            <person name="Johnson S.C."/>
            <person name="Brown L.L."/>
        </authorList>
    </citation>
    <scope>NUCLEOTIDE SEQUENCE [LARGE SCALE GENOMIC DNA]</scope>
    <source>
        <strain>A449</strain>
    </source>
</reference>
<organism>
    <name type="scientific">Aeromonas salmonicida (strain A449)</name>
    <dbReference type="NCBI Taxonomy" id="382245"/>
    <lineage>
        <taxon>Bacteria</taxon>
        <taxon>Pseudomonadati</taxon>
        <taxon>Pseudomonadota</taxon>
        <taxon>Gammaproteobacteria</taxon>
        <taxon>Aeromonadales</taxon>
        <taxon>Aeromonadaceae</taxon>
        <taxon>Aeromonas</taxon>
    </lineage>
</organism>
<keyword id="KW-0687">Ribonucleoprotein</keyword>
<keyword id="KW-0689">Ribosomal protein</keyword>
<keyword id="KW-0694">RNA-binding</keyword>
<keyword id="KW-0699">rRNA-binding</keyword>
<proteinExistence type="inferred from homology"/>
<evidence type="ECO:0000255" key="1">
    <source>
        <dbReference type="HAMAP-Rule" id="MF_01345"/>
    </source>
</evidence>
<evidence type="ECO:0000305" key="2"/>
<comment type="function">
    <text evidence="1">One of the primary rRNA binding proteins, it binds specifically to the 5'-end of 16S ribosomal RNA.</text>
</comment>
<comment type="subunit">
    <text evidence="1">Part of the 30S ribosomal subunit.</text>
</comment>
<comment type="similarity">
    <text evidence="1">Belongs to the universal ribosomal protein uS17 family.</text>
</comment>
<name>RS17_AERS4</name>
<sequence length="82" mass="9441">MTDKIRTLQGRVISDKMEKSITVAIERKVKHPIYGKIIKRTTKLHVHDENNECKAGDLVEIRECRPLSKTKSWTLVAILEKA</sequence>
<gene>
    <name evidence="1" type="primary">rpsQ</name>
    <name type="ordered locus">ASA_4078</name>
</gene>
<protein>
    <recommendedName>
        <fullName evidence="1">Small ribosomal subunit protein uS17</fullName>
    </recommendedName>
    <alternativeName>
        <fullName evidence="2">30S ribosomal protein S17</fullName>
    </alternativeName>
</protein>